<protein>
    <recommendedName>
        <fullName>Chlorophyllide reductase subunit Z</fullName>
        <ecNumber evidence="1">1.3.7.15</ecNumber>
    </recommendedName>
    <alternativeName>
        <fullName>Chlorin reductase subunit Z</fullName>
    </alternativeName>
</protein>
<keyword id="KW-0077">Bacteriochlorophyll biosynthesis</keyword>
<keyword id="KW-0149">Chlorophyll biosynthesis</keyword>
<keyword id="KW-0903">Direct protein sequencing</keyword>
<keyword id="KW-0560">Oxidoreductase</keyword>
<keyword id="KW-0602">Photosynthesis</keyword>
<keyword id="KW-1185">Reference proteome</keyword>
<reference key="1">
    <citation type="journal article" date="1993" name="J. Bacteriol.">
        <title>The Rhodobacter capsulatus chlorin reductase-encoding locus, bchA, consists of three genes, bchX, bchY, and bchZ.</title>
        <authorList>
            <person name="Burke D.H."/>
            <person name="Alberti M."/>
            <person name="Hearst J.E."/>
        </authorList>
    </citation>
    <scope>NUCLEOTIDE SEQUENCE [GENOMIC DNA]</scope>
    <source>
        <strain>ATCC BAA-309 / NBRC 16581 / SB1003</strain>
    </source>
</reference>
<reference key="2">
    <citation type="journal article" date="2010" name="J. Bacteriol.">
        <title>Complete genome sequence of the photosynthetic purple nonsulfur bacterium Rhodobacter capsulatus SB 1003.</title>
        <authorList>
            <person name="Strnad H."/>
            <person name="Lapidus A."/>
            <person name="Paces J."/>
            <person name="Ulbrich P."/>
            <person name="Vlcek C."/>
            <person name="Paces V."/>
            <person name="Haselkorn R."/>
        </authorList>
    </citation>
    <scope>NUCLEOTIDE SEQUENCE [LARGE SCALE GENOMIC DNA]</scope>
    <source>
        <strain>ATCC BAA-309 / NBRC 16581 / SB1003</strain>
    </source>
</reference>
<reference key="3">
    <citation type="journal article" date="2006" name="J. Biol. Chem.">
        <title>A second nitrogenase-like enzyme for bacteriochlorophyll biosynthesis: reconstitution of chlorophyllide a reductase with purified X-protein (BchX) and YZ-protein (BchY-BchZ) from Rhodobacter capsulatus.</title>
        <authorList>
            <person name="Nomata J."/>
            <person name="Mizoguchi T."/>
            <person name="Tamiaki H."/>
            <person name="Fujita Y."/>
        </authorList>
    </citation>
    <scope>PROTEIN SEQUENCE OF 1-5</scope>
    <scope>FUNCTION</scope>
    <scope>CATALYTIC ACTIVITY</scope>
    <scope>SUBUNIT</scope>
</reference>
<evidence type="ECO:0000269" key="1">
    <source>
    </source>
</evidence>
<evidence type="ECO:0000305" key="2"/>
<gene>
    <name type="primary">bchZ</name>
    <name type="ordered locus">RCAP_rcc00689</name>
</gene>
<proteinExistence type="evidence at protein level"/>
<comment type="function">
    <text evidence="1">Converts chlorophylls (Chl) into bacteriochlorophylls (BChl) by reducing ring B of the tetrapyrrole.</text>
</comment>
<comment type="catalytic activity">
    <reaction evidence="1">
        <text>3-deacetyl-3-vinylbacteriochlorophyllide a + 2 oxidized [2Fe-2S]-[ferredoxin] + ADP + phosphate = chlorophyllide a + 2 reduced [2Fe-2S]-[ferredoxin] + ATP + H2O + H(+)</text>
        <dbReference type="Rhea" id="RHEA:37051"/>
        <dbReference type="Rhea" id="RHEA-COMP:10000"/>
        <dbReference type="Rhea" id="RHEA-COMP:10001"/>
        <dbReference type="ChEBI" id="CHEBI:15377"/>
        <dbReference type="ChEBI" id="CHEBI:15378"/>
        <dbReference type="ChEBI" id="CHEBI:30616"/>
        <dbReference type="ChEBI" id="CHEBI:33737"/>
        <dbReference type="ChEBI" id="CHEBI:33738"/>
        <dbReference type="ChEBI" id="CHEBI:43474"/>
        <dbReference type="ChEBI" id="CHEBI:83348"/>
        <dbReference type="ChEBI" id="CHEBI:83373"/>
        <dbReference type="ChEBI" id="CHEBI:456216"/>
        <dbReference type="EC" id="1.3.7.15"/>
    </reaction>
</comment>
<comment type="catalytic activity">
    <reaction evidence="1">
        <text>bacteriochlorophyllide a + 2 oxidized [2Fe-2S]-[ferredoxin] + ADP + phosphate = 3-acetyl-3-devinylchlorophyllide a + 2 reduced [2Fe-2S]-[ferredoxin] + ATP + H2O + H(+)</text>
        <dbReference type="Rhea" id="RHEA:48944"/>
        <dbReference type="Rhea" id="RHEA-COMP:10000"/>
        <dbReference type="Rhea" id="RHEA-COMP:10001"/>
        <dbReference type="ChEBI" id="CHEBI:15377"/>
        <dbReference type="ChEBI" id="CHEBI:15378"/>
        <dbReference type="ChEBI" id="CHEBI:30616"/>
        <dbReference type="ChEBI" id="CHEBI:33737"/>
        <dbReference type="ChEBI" id="CHEBI:33738"/>
        <dbReference type="ChEBI" id="CHEBI:43474"/>
        <dbReference type="ChEBI" id="CHEBI:90794"/>
        <dbReference type="ChEBI" id="CHEBI:90795"/>
        <dbReference type="ChEBI" id="CHEBI:456216"/>
        <dbReference type="EC" id="1.3.7.15"/>
    </reaction>
</comment>
<comment type="catalytic activity">
    <reaction evidence="1">
        <text>3-deacetyl-3-(1-hydroxyethyl)bacteriochlorophyllide a + 2 oxidized [2Fe-2S]-[ferredoxin] + ADP + phosphate = 3-devinyl-3-(1-hydroxyethyl)chlorophyllide a + 2 reduced [2Fe-2S]-[ferredoxin] + ATP + H2O + H(+)</text>
        <dbReference type="Rhea" id="RHEA:48948"/>
        <dbReference type="Rhea" id="RHEA-COMP:10000"/>
        <dbReference type="Rhea" id="RHEA-COMP:10001"/>
        <dbReference type="ChEBI" id="CHEBI:15377"/>
        <dbReference type="ChEBI" id="CHEBI:15378"/>
        <dbReference type="ChEBI" id="CHEBI:30616"/>
        <dbReference type="ChEBI" id="CHEBI:33737"/>
        <dbReference type="ChEBI" id="CHEBI:33738"/>
        <dbReference type="ChEBI" id="CHEBI:43474"/>
        <dbReference type="ChEBI" id="CHEBI:90791"/>
        <dbReference type="ChEBI" id="CHEBI:90792"/>
        <dbReference type="ChEBI" id="CHEBI:456216"/>
        <dbReference type="EC" id="1.3.7.15"/>
    </reaction>
</comment>
<comment type="pathway">
    <text>Porphyrin-containing compound metabolism; bacteriochlorophyll biosynthesis.</text>
</comment>
<comment type="subunit">
    <text evidence="1">Chlorophyllide reductase is composed of three subunits; BchX, BchY and BchZ. Forms a heterodimer of one BchY and one BchZ subunit.</text>
</comment>
<comment type="similarity">
    <text evidence="2">Belongs to the ChlB/BchB/BchZ family.</text>
</comment>
<feature type="chain" id="PRO_0000219849" description="Chlorophyllide reductase subunit Z">
    <location>
        <begin position="1"/>
        <end position="490"/>
    </location>
</feature>
<organism>
    <name type="scientific">Rhodobacter capsulatus (strain ATCC BAA-309 / NBRC 16581 / SB1003)</name>
    <dbReference type="NCBI Taxonomy" id="272942"/>
    <lineage>
        <taxon>Bacteria</taxon>
        <taxon>Pseudomonadati</taxon>
        <taxon>Pseudomonadota</taxon>
        <taxon>Alphaproteobacteria</taxon>
        <taxon>Rhodobacterales</taxon>
        <taxon>Rhodobacter group</taxon>
        <taxon>Rhodobacter</taxon>
    </lineage>
</organism>
<dbReference type="EC" id="1.3.7.15" evidence="1"/>
<dbReference type="EMBL" id="Z11165">
    <property type="protein sequence ID" value="CAA77550.1"/>
    <property type="molecule type" value="Genomic_DNA"/>
</dbReference>
<dbReference type="EMBL" id="CP001312">
    <property type="protein sequence ID" value="ADE84454.1"/>
    <property type="molecule type" value="Genomic_DNA"/>
</dbReference>
<dbReference type="PIR" id="D49850">
    <property type="entry name" value="D49850"/>
</dbReference>
<dbReference type="RefSeq" id="WP_013066433.1">
    <property type="nucleotide sequence ID" value="NC_014034.1"/>
</dbReference>
<dbReference type="SMR" id="P26179"/>
<dbReference type="STRING" id="272942.RCAP_rcc00689"/>
<dbReference type="GeneID" id="31489635"/>
<dbReference type="KEGG" id="rcp:RCAP_rcc00689"/>
<dbReference type="eggNOG" id="COG2710">
    <property type="taxonomic scope" value="Bacteria"/>
</dbReference>
<dbReference type="HOGENOM" id="CLU_564837_0_0_5"/>
<dbReference type="OrthoDB" id="5713965at2"/>
<dbReference type="BioCyc" id="MetaCyc:MONOMER-13255"/>
<dbReference type="UniPathway" id="UPA00669"/>
<dbReference type="Proteomes" id="UP000002361">
    <property type="component" value="Chromosome"/>
</dbReference>
<dbReference type="GO" id="GO:0016730">
    <property type="term" value="F:oxidoreductase activity, acting on iron-sulfur proteins as donors"/>
    <property type="evidence" value="ECO:0007669"/>
    <property type="project" value="InterPro"/>
</dbReference>
<dbReference type="GO" id="GO:0030494">
    <property type="term" value="P:bacteriochlorophyll biosynthetic process"/>
    <property type="evidence" value="ECO:0007669"/>
    <property type="project" value="UniProtKB-UniPathway"/>
</dbReference>
<dbReference type="GO" id="GO:0015979">
    <property type="term" value="P:photosynthesis"/>
    <property type="evidence" value="ECO:0007669"/>
    <property type="project" value="UniProtKB-KW"/>
</dbReference>
<dbReference type="CDD" id="cd01982">
    <property type="entry name" value="Chlide_reductase_Z"/>
    <property type="match status" value="1"/>
</dbReference>
<dbReference type="Gene3D" id="3.40.50.1980">
    <property type="entry name" value="Nitrogenase molybdenum iron protein domain"/>
    <property type="match status" value="1"/>
</dbReference>
<dbReference type="InterPro" id="IPR010244">
    <property type="entry name" value="BchZ"/>
</dbReference>
<dbReference type="InterPro" id="IPR050152">
    <property type="entry name" value="ChlB/BchB/BchZ"/>
</dbReference>
<dbReference type="InterPro" id="IPR013580">
    <property type="entry name" value="LI-POR_suB-like_C"/>
</dbReference>
<dbReference type="InterPro" id="IPR000510">
    <property type="entry name" value="Nase/OxRdtase_comp1"/>
</dbReference>
<dbReference type="InterPro" id="IPR016209">
    <property type="entry name" value="Protochlorophyllide_Rdtase"/>
</dbReference>
<dbReference type="NCBIfam" id="TIGR02014">
    <property type="entry name" value="BchZ"/>
    <property type="match status" value="1"/>
</dbReference>
<dbReference type="PANTHER" id="PTHR33712">
    <property type="entry name" value="LIGHT-INDEPENDENT PROTOCHLOROPHYLLIDE REDUCTASE SUBUNIT B"/>
    <property type="match status" value="1"/>
</dbReference>
<dbReference type="PANTHER" id="PTHR33712:SF7">
    <property type="entry name" value="LIGHT-INDEPENDENT PROTOCHLOROPHYLLIDE REDUCTASE SUBUNIT B"/>
    <property type="match status" value="1"/>
</dbReference>
<dbReference type="Pfam" id="PF00148">
    <property type="entry name" value="Oxidored_nitro"/>
    <property type="match status" value="1"/>
</dbReference>
<dbReference type="Pfam" id="PF08369">
    <property type="entry name" value="PCP_red"/>
    <property type="match status" value="1"/>
</dbReference>
<dbReference type="PIRSF" id="PIRSF000163">
    <property type="entry name" value="PCP_ChlB"/>
    <property type="match status" value="1"/>
</dbReference>
<dbReference type="SUPFAM" id="SSF53807">
    <property type="entry name" value="Helical backbone' metal receptor"/>
    <property type="match status" value="1"/>
</dbReference>
<sequence>MFLLDHDRAGGYWGAVYTFCAVKGLQVVIDGPVGCENLPVTSVLHYTDGLPPHELPIVVTGLGDAELGREGTEGAMSRAWKTLDPLLPSVVVTGSIAEMIGGGVTPQGTNLQRFLARTIDEDQWQCADRAMTWLFTEYGMTKGRMPGERMRPDGAKPRVNILGPMYGAFNMASDLHEIRRLVEGIGAEVNMVFPLGTHLSEVRNLVNADVNVVMYREFGRNLAEILGKPYLQAPIGLESTTKFLRSLGELLGLDPEPFIEREKHATLKPLWDLWRSVTQDFFATASFGICATETYARGIKAYLEGDLGLPCAFAVARKAGEKTKSDEVRGLIRQTRPLVVFGSINEKIYLAETKAGHGPAASFVPASFPGAAIRRATGTPFMGYMGSVYLLQEICNGLFDALFNILPLASEMDSAAATPATLRRDMPWDADAQAALDRIVSQHPVLTRISAAKSLRDAAEKAALDQGAERVVLEMVEALGDATMDRKGGN</sequence>
<accession>P26179</accession>
<accession>D5AP82</accession>
<name>BCHZ_RHOCB</name>